<comment type="catalytic activity">
    <reaction evidence="1">
        <text>1-(2-carboxyphenylamino)-1-deoxy-D-ribulose 5-phosphate + H(+) = (1S,2R)-1-C-(indol-3-yl)glycerol 3-phosphate + CO2 + H2O</text>
        <dbReference type="Rhea" id="RHEA:23476"/>
        <dbReference type="ChEBI" id="CHEBI:15377"/>
        <dbReference type="ChEBI" id="CHEBI:15378"/>
        <dbReference type="ChEBI" id="CHEBI:16526"/>
        <dbReference type="ChEBI" id="CHEBI:58613"/>
        <dbReference type="ChEBI" id="CHEBI:58866"/>
        <dbReference type="EC" id="4.1.1.48"/>
    </reaction>
</comment>
<comment type="pathway">
    <text evidence="1">Amino-acid biosynthesis; L-tryptophan biosynthesis; L-tryptophan from chorismate: step 4/5.</text>
</comment>
<comment type="similarity">
    <text evidence="1">Belongs to the TrpC family.</text>
</comment>
<feature type="chain" id="PRO_1000018432" description="Indole-3-glycerol phosphate synthase">
    <location>
        <begin position="1"/>
        <end position="272"/>
    </location>
</feature>
<accession>A0JVL1</accession>
<dbReference type="EC" id="4.1.1.48" evidence="1"/>
<dbReference type="EMBL" id="CP000454">
    <property type="protein sequence ID" value="ABK03081.1"/>
    <property type="molecule type" value="Genomic_DNA"/>
</dbReference>
<dbReference type="RefSeq" id="WP_011691547.1">
    <property type="nucleotide sequence ID" value="NC_008541.1"/>
</dbReference>
<dbReference type="SMR" id="A0JVL1"/>
<dbReference type="STRING" id="290399.Arth_1687"/>
<dbReference type="KEGG" id="art:Arth_1687"/>
<dbReference type="eggNOG" id="COG0134">
    <property type="taxonomic scope" value="Bacteria"/>
</dbReference>
<dbReference type="HOGENOM" id="CLU_034247_0_0_11"/>
<dbReference type="OrthoDB" id="9804217at2"/>
<dbReference type="UniPathway" id="UPA00035">
    <property type="reaction ID" value="UER00043"/>
</dbReference>
<dbReference type="Proteomes" id="UP000000754">
    <property type="component" value="Chromosome"/>
</dbReference>
<dbReference type="GO" id="GO:0004425">
    <property type="term" value="F:indole-3-glycerol-phosphate synthase activity"/>
    <property type="evidence" value="ECO:0007669"/>
    <property type="project" value="UniProtKB-UniRule"/>
</dbReference>
<dbReference type="GO" id="GO:0004640">
    <property type="term" value="F:phosphoribosylanthranilate isomerase activity"/>
    <property type="evidence" value="ECO:0007669"/>
    <property type="project" value="TreeGrafter"/>
</dbReference>
<dbReference type="GO" id="GO:0000162">
    <property type="term" value="P:L-tryptophan biosynthetic process"/>
    <property type="evidence" value="ECO:0007669"/>
    <property type="project" value="UniProtKB-UniRule"/>
</dbReference>
<dbReference type="CDD" id="cd00331">
    <property type="entry name" value="IGPS"/>
    <property type="match status" value="1"/>
</dbReference>
<dbReference type="FunFam" id="3.20.20.70:FF:000024">
    <property type="entry name" value="Indole-3-glycerol phosphate synthase"/>
    <property type="match status" value="1"/>
</dbReference>
<dbReference type="Gene3D" id="3.20.20.70">
    <property type="entry name" value="Aldolase class I"/>
    <property type="match status" value="1"/>
</dbReference>
<dbReference type="HAMAP" id="MF_00134_B">
    <property type="entry name" value="IGPS_B"/>
    <property type="match status" value="1"/>
</dbReference>
<dbReference type="InterPro" id="IPR013785">
    <property type="entry name" value="Aldolase_TIM"/>
</dbReference>
<dbReference type="InterPro" id="IPR045186">
    <property type="entry name" value="Indole-3-glycerol_P_synth"/>
</dbReference>
<dbReference type="InterPro" id="IPR013798">
    <property type="entry name" value="Indole-3-glycerol_P_synth_dom"/>
</dbReference>
<dbReference type="InterPro" id="IPR001468">
    <property type="entry name" value="Indole-3-GlycerolPSynthase_CS"/>
</dbReference>
<dbReference type="InterPro" id="IPR011060">
    <property type="entry name" value="RibuloseP-bd_barrel"/>
</dbReference>
<dbReference type="NCBIfam" id="NF001369">
    <property type="entry name" value="PRK00278.1-1"/>
    <property type="match status" value="1"/>
</dbReference>
<dbReference type="NCBIfam" id="NF001377">
    <property type="entry name" value="PRK00278.2-4"/>
    <property type="match status" value="1"/>
</dbReference>
<dbReference type="PANTHER" id="PTHR22854:SF2">
    <property type="entry name" value="INDOLE-3-GLYCEROL-PHOSPHATE SYNTHASE"/>
    <property type="match status" value="1"/>
</dbReference>
<dbReference type="PANTHER" id="PTHR22854">
    <property type="entry name" value="TRYPTOPHAN BIOSYNTHESIS PROTEIN"/>
    <property type="match status" value="1"/>
</dbReference>
<dbReference type="Pfam" id="PF00218">
    <property type="entry name" value="IGPS"/>
    <property type="match status" value="1"/>
</dbReference>
<dbReference type="SUPFAM" id="SSF51366">
    <property type="entry name" value="Ribulose-phoshate binding barrel"/>
    <property type="match status" value="1"/>
</dbReference>
<dbReference type="PROSITE" id="PS00614">
    <property type="entry name" value="IGPS"/>
    <property type="match status" value="1"/>
</dbReference>
<gene>
    <name evidence="1" type="primary">trpC</name>
    <name type="ordered locus">Arth_1687</name>
</gene>
<proteinExistence type="inferred from homology"/>
<protein>
    <recommendedName>
        <fullName evidence="1">Indole-3-glycerol phosphate synthase</fullName>
        <shortName evidence="1">IGPS</shortName>
        <ecNumber evidence="1">4.1.1.48</ecNumber>
    </recommendedName>
</protein>
<organism>
    <name type="scientific">Arthrobacter sp. (strain FB24)</name>
    <dbReference type="NCBI Taxonomy" id="290399"/>
    <lineage>
        <taxon>Bacteria</taxon>
        <taxon>Bacillati</taxon>
        <taxon>Actinomycetota</taxon>
        <taxon>Actinomycetes</taxon>
        <taxon>Micrococcales</taxon>
        <taxon>Micrococcaceae</taxon>
        <taxon>Arthrobacter</taxon>
    </lineage>
</organism>
<name>TRPC_ARTS2</name>
<evidence type="ECO:0000255" key="1">
    <source>
        <dbReference type="HAMAP-Rule" id="MF_00134"/>
    </source>
</evidence>
<reference key="1">
    <citation type="journal article" date="2013" name="Stand. Genomic Sci.">
        <title>Complete genome sequence of Arthrobacter sp. strain FB24.</title>
        <authorList>
            <person name="Nakatsu C.H."/>
            <person name="Barabote R."/>
            <person name="Thompson S."/>
            <person name="Bruce D."/>
            <person name="Detter C."/>
            <person name="Brettin T."/>
            <person name="Han C."/>
            <person name="Beasley F."/>
            <person name="Chen W."/>
            <person name="Konopka A."/>
            <person name="Xie G."/>
        </authorList>
    </citation>
    <scope>NUCLEOTIDE SEQUENCE [LARGE SCALE GENOMIC DNA]</scope>
    <source>
        <strain>FB24</strain>
    </source>
</reference>
<sequence>MTVLDDINAGAREDMEARRRLVSLAELKDRAAAAAPARDAWAALGGDDSTRKQLKVIAEIKRRSPSKGDLASIADPAELAVQYADGGASVISVLTEQRRFSGSLADFDAVRKAVDVPLLRKDFTVDEYQIWEARAHGADLILLIVASLTDAELRDFSQLTRELGMNALVETHTAEEIERAVAADARIIGVNVRNLKTLDVDRSVFASLSGGIPPEAVIVAESGVRGVDDVRHYAASGANAVLVGEALVSDATPRERIAEFTAAGAEAIAARV</sequence>
<keyword id="KW-0028">Amino-acid biosynthesis</keyword>
<keyword id="KW-0057">Aromatic amino acid biosynthesis</keyword>
<keyword id="KW-0210">Decarboxylase</keyword>
<keyword id="KW-0456">Lyase</keyword>
<keyword id="KW-1185">Reference proteome</keyword>
<keyword id="KW-0822">Tryptophan biosynthesis</keyword>